<accession>Q66C05</accession>
<accession>Q9ZEX5</accession>
<proteinExistence type="inferred from homology"/>
<reference key="1">
    <citation type="journal article" date="2004" name="Proc. Natl. Acad. Sci. U.S.A.">
        <title>Insights into the evolution of Yersinia pestis through whole-genome comparison with Yersinia pseudotuberculosis.</title>
        <authorList>
            <person name="Chain P.S.G."/>
            <person name="Carniel E."/>
            <person name="Larimer F.W."/>
            <person name="Lamerdin J."/>
            <person name="Stoutland P.O."/>
            <person name="Regala W.M."/>
            <person name="Georgescu A.M."/>
            <person name="Vergez L.M."/>
            <person name="Land M.L."/>
            <person name="Motin V.L."/>
            <person name="Brubaker R.R."/>
            <person name="Fowler J."/>
            <person name="Hinnebusch J."/>
            <person name="Marceau M."/>
            <person name="Medigue C."/>
            <person name="Simonet M."/>
            <person name="Chenal-Francisque V."/>
            <person name="Souza B."/>
            <person name="Dacheux D."/>
            <person name="Elliott J.M."/>
            <person name="Derbise A."/>
            <person name="Hauser L.J."/>
            <person name="Garcia E."/>
        </authorList>
    </citation>
    <scope>NUCLEOTIDE SEQUENCE [LARGE SCALE GENOMIC DNA]</scope>
    <source>
        <strain>IP32953</strain>
    </source>
</reference>
<reference key="2">
    <citation type="journal article" date="1998" name="Mol. Microbiol.">
        <title>The high-pathogenicity island of Yersinia pseudotuberculosis can be inserted into any of the three chromosomal asn tRNA genes.</title>
        <authorList>
            <person name="Buchrieser C."/>
            <person name="Brosch R."/>
            <person name="Bach S."/>
            <person name="Guiyoule A."/>
            <person name="Carniel E."/>
        </authorList>
    </citation>
    <scope>NUCLEOTIDE SEQUENCE [GENOMIC DNA] OF 117-270</scope>
    <source>
        <strain>IP32637 / Serotype I</strain>
    </source>
</reference>
<gene>
    <name evidence="1" type="primary">mtfA</name>
    <name type="ordered locus">YPTB1611</name>
</gene>
<name>MTFA_YERPS</name>
<comment type="function">
    <text evidence="1">Involved in the modulation of the activity of the glucose-phosphotransferase system (glucose-PTS). Interacts with the transcriptional repressor Mlc, preventing its interaction with DNA and leading to the modulation of expression of genes regulated by Mlc, including ptsG, which encodes the PTS system glucose-specific EIICB component.</text>
</comment>
<comment type="function">
    <text evidence="1">Shows zinc-dependent metallopeptidase activity.</text>
</comment>
<comment type="cofactor">
    <cofactor evidence="1">
        <name>Zn(2+)</name>
        <dbReference type="ChEBI" id="CHEBI:29105"/>
    </cofactor>
    <text evidence="1">Binds 1 zinc ion per subunit.</text>
</comment>
<comment type="subunit">
    <text evidence="1">Interacts with Mlc.</text>
</comment>
<comment type="subcellular location">
    <subcellularLocation>
        <location evidence="1">Cytoplasm</location>
    </subcellularLocation>
</comment>
<comment type="similarity">
    <text evidence="1">Belongs to the MtfA family.</text>
</comment>
<evidence type="ECO:0000255" key="1">
    <source>
        <dbReference type="HAMAP-Rule" id="MF_01593"/>
    </source>
</evidence>
<evidence type="ECO:0000305" key="2"/>
<sequence>MIKWLWKANKPQAEMLAQWHEALNIPLLAPLNEPEQQRLVSVASQLLQQKRFIPLQGLILTPLMQARLALLFALPVMELGAKWLDGFHEVLIYPSPFIVAEDWQDDLGLVHSGQSVQSGQSWEQGPIVLNWQDIQDSFDLSGFNLVIHEAAHKLDMRNGGHSNGVPPIAMRDVAVWEHDLHHAMDNIQDEIDMVGVEGASMDAYAASNPAECFAVLSEYFFSAPELLEGRFPAVYQHFCRFYRQDPLARLKRWENSLADNPPPENTHSHR</sequence>
<feature type="chain" id="PRO_0000316333" description="Mlc titration factor A">
    <location>
        <begin position="1"/>
        <end position="270"/>
    </location>
</feature>
<feature type="binding site" evidence="1">
    <location>
        <position position="111"/>
    </location>
    <ligand>
        <name>Zn(2+)</name>
        <dbReference type="ChEBI" id="CHEBI:29105"/>
    </ligand>
</feature>
<feature type="binding site" evidence="1">
    <location>
        <position position="148"/>
    </location>
    <ligand>
        <name>Zn(2+)</name>
        <dbReference type="ChEBI" id="CHEBI:29105"/>
    </ligand>
</feature>
<feature type="binding site" evidence="1">
    <location>
        <position position="152"/>
    </location>
    <ligand>
        <name>Zn(2+)</name>
        <dbReference type="ChEBI" id="CHEBI:29105"/>
    </ligand>
</feature>
<feature type="binding site" evidence="1">
    <location>
        <position position="211"/>
    </location>
    <ligand>
        <name>Zn(2+)</name>
        <dbReference type="ChEBI" id="CHEBI:29105"/>
    </ligand>
</feature>
<feature type="sequence conflict" description="In Ref. 2; CAA08753." evidence="2" ref="2">
    <original>E</original>
    <variation>K</variation>
    <location>
        <position position="190"/>
    </location>
</feature>
<keyword id="KW-0031">Aminopeptidase</keyword>
<keyword id="KW-0963">Cytoplasm</keyword>
<keyword id="KW-0378">Hydrolase</keyword>
<keyword id="KW-0479">Metal-binding</keyword>
<keyword id="KW-0482">Metalloprotease</keyword>
<keyword id="KW-0645">Protease</keyword>
<keyword id="KW-0862">Zinc</keyword>
<protein>
    <recommendedName>
        <fullName evidence="1">Mlc titration factor A</fullName>
    </recommendedName>
    <alternativeName>
        <fullName evidence="1">Probable zinc metallopeptidase MtfA</fullName>
        <ecNumber evidence="1">3.4.11.-</ecNumber>
    </alternativeName>
</protein>
<organism>
    <name type="scientific">Yersinia pseudotuberculosis serotype I (strain IP32953)</name>
    <dbReference type="NCBI Taxonomy" id="273123"/>
    <lineage>
        <taxon>Bacteria</taxon>
        <taxon>Pseudomonadati</taxon>
        <taxon>Pseudomonadota</taxon>
        <taxon>Gammaproteobacteria</taxon>
        <taxon>Enterobacterales</taxon>
        <taxon>Yersiniaceae</taxon>
        <taxon>Yersinia</taxon>
    </lineage>
</organism>
<dbReference type="EC" id="3.4.11.-" evidence="1"/>
<dbReference type="EMBL" id="BX936398">
    <property type="protein sequence ID" value="CAH20850.1"/>
    <property type="molecule type" value="Genomic_DNA"/>
</dbReference>
<dbReference type="EMBL" id="AJ009592">
    <property type="protein sequence ID" value="CAA08753.1"/>
    <property type="molecule type" value="Genomic_DNA"/>
</dbReference>
<dbReference type="RefSeq" id="WP_002211042.1">
    <property type="nucleotide sequence ID" value="NZ_CP009712.1"/>
</dbReference>
<dbReference type="SMR" id="Q66C05"/>
<dbReference type="MEROPS" id="M90.001"/>
<dbReference type="GeneID" id="57976845"/>
<dbReference type="KEGG" id="ypo:BZ17_893"/>
<dbReference type="KEGG" id="yps:YPTB1611"/>
<dbReference type="PATRIC" id="fig|273123.14.peg.950"/>
<dbReference type="Proteomes" id="UP000001011">
    <property type="component" value="Chromosome"/>
</dbReference>
<dbReference type="GO" id="GO:0005829">
    <property type="term" value="C:cytosol"/>
    <property type="evidence" value="ECO:0007669"/>
    <property type="project" value="TreeGrafter"/>
</dbReference>
<dbReference type="GO" id="GO:0004177">
    <property type="term" value="F:aminopeptidase activity"/>
    <property type="evidence" value="ECO:0007669"/>
    <property type="project" value="UniProtKB-UniRule"/>
</dbReference>
<dbReference type="GO" id="GO:0008237">
    <property type="term" value="F:metallopeptidase activity"/>
    <property type="evidence" value="ECO:0007669"/>
    <property type="project" value="UniProtKB-UniRule"/>
</dbReference>
<dbReference type="GO" id="GO:0008270">
    <property type="term" value="F:zinc ion binding"/>
    <property type="evidence" value="ECO:0007669"/>
    <property type="project" value="UniProtKB-UniRule"/>
</dbReference>
<dbReference type="GO" id="GO:0006508">
    <property type="term" value="P:proteolysis"/>
    <property type="evidence" value="ECO:0007669"/>
    <property type="project" value="UniProtKB-KW"/>
</dbReference>
<dbReference type="CDD" id="cd20169">
    <property type="entry name" value="Peptidase_M90_mtfA"/>
    <property type="match status" value="1"/>
</dbReference>
<dbReference type="FunFam" id="1.10.472.150:FF:000001">
    <property type="entry name" value="Protein MtfA"/>
    <property type="match status" value="1"/>
</dbReference>
<dbReference type="FunFam" id="3.40.390.10:FF:000012">
    <property type="entry name" value="Protein MtfA"/>
    <property type="match status" value="1"/>
</dbReference>
<dbReference type="Gene3D" id="3.40.390.10">
    <property type="entry name" value="Collagenase (Catalytic Domain)"/>
    <property type="match status" value="1"/>
</dbReference>
<dbReference type="Gene3D" id="1.10.472.150">
    <property type="entry name" value="Glucose-regulated metallo-peptidase M90, N-terminal domain"/>
    <property type="match status" value="1"/>
</dbReference>
<dbReference type="HAMAP" id="MF_01593">
    <property type="entry name" value="MtfA"/>
    <property type="match status" value="1"/>
</dbReference>
<dbReference type="InterPro" id="IPR024079">
    <property type="entry name" value="MetalloPept_cat_dom_sf"/>
</dbReference>
<dbReference type="InterPro" id="IPR057256">
    <property type="entry name" value="MtfA_enterob"/>
</dbReference>
<dbReference type="InterPro" id="IPR010384">
    <property type="entry name" value="MtfA_fam"/>
</dbReference>
<dbReference type="InterPro" id="IPR042252">
    <property type="entry name" value="MtfA_N"/>
</dbReference>
<dbReference type="NCBIfam" id="NF011939">
    <property type="entry name" value="PRK15410.1"/>
    <property type="match status" value="1"/>
</dbReference>
<dbReference type="PANTHER" id="PTHR30164">
    <property type="entry name" value="MTFA PEPTIDASE"/>
    <property type="match status" value="1"/>
</dbReference>
<dbReference type="PANTHER" id="PTHR30164:SF2">
    <property type="entry name" value="PROTEIN MTFA"/>
    <property type="match status" value="1"/>
</dbReference>
<dbReference type="Pfam" id="PF06167">
    <property type="entry name" value="Peptidase_M90"/>
    <property type="match status" value="1"/>
</dbReference>
<dbReference type="SUPFAM" id="SSF55486">
    <property type="entry name" value="Metalloproteases ('zincins'), catalytic domain"/>
    <property type="match status" value="1"/>
</dbReference>